<sequence>MQTKNTFSWIKKEIIRSISVSLMIYIIARTSISNAYPIFAQQGYENPREATGRIVCANCHLANKPVDIEVPQAVLPDTVFEAVVRIPYDMQVKQVLANGKRGGLNVGAVLILPEGFELAPPDRISPEMKEKIGNLSFQSYRPNKKNILVIGPVSGQKYSEVTFPILSPDPATNKDVHFLKYPIYVGGNRGRGQIYPDGSKSNNTVYNATAAGVVSKIIRKEKGGYEITISDASDERQVVDIIPPGPELLVSEGESIKLDQPLTSNPNVGGFGQGDAEIVLQDPFRVQGLLFFLASVILAQIFLVLKKKQFEKVQLSEMNF</sequence>
<organism>
    <name type="scientific">Eucalyptus globulus subsp. globulus</name>
    <name type="common">Tasmanian blue gum</name>
    <dbReference type="NCBI Taxonomy" id="71271"/>
    <lineage>
        <taxon>Eukaryota</taxon>
        <taxon>Viridiplantae</taxon>
        <taxon>Streptophyta</taxon>
        <taxon>Embryophyta</taxon>
        <taxon>Tracheophyta</taxon>
        <taxon>Spermatophyta</taxon>
        <taxon>Magnoliopsida</taxon>
        <taxon>eudicotyledons</taxon>
        <taxon>Gunneridae</taxon>
        <taxon>Pentapetalae</taxon>
        <taxon>rosids</taxon>
        <taxon>malvids</taxon>
        <taxon>Myrtales</taxon>
        <taxon>Myrtaceae</taxon>
        <taxon>Myrtoideae</taxon>
        <taxon>Eucalypteae</taxon>
        <taxon>Eucalyptus</taxon>
    </lineage>
</organism>
<evidence type="ECO:0000250" key="1"/>
<evidence type="ECO:0000255" key="2">
    <source>
        <dbReference type="HAMAP-Rule" id="MF_00610"/>
    </source>
</evidence>
<feature type="signal peptide" evidence="2">
    <location>
        <begin position="1"/>
        <end position="35"/>
    </location>
</feature>
<feature type="chain" id="PRO_0000275413" description="Cytochrome f">
    <location>
        <begin position="36"/>
        <end position="320"/>
    </location>
</feature>
<feature type="transmembrane region" description="Helical" evidence="2">
    <location>
        <begin position="286"/>
        <end position="306"/>
    </location>
</feature>
<feature type="binding site" description="axial binding residue" evidence="2">
    <location>
        <position position="36"/>
    </location>
    <ligand>
        <name>heme</name>
        <dbReference type="ChEBI" id="CHEBI:30413"/>
    </ligand>
    <ligandPart>
        <name>Fe</name>
        <dbReference type="ChEBI" id="CHEBI:18248"/>
    </ligandPart>
</feature>
<feature type="binding site" description="covalent" evidence="2">
    <location>
        <position position="56"/>
    </location>
    <ligand>
        <name>heme</name>
        <dbReference type="ChEBI" id="CHEBI:30413"/>
    </ligand>
</feature>
<feature type="binding site" description="covalent" evidence="2">
    <location>
        <position position="59"/>
    </location>
    <ligand>
        <name>heme</name>
        <dbReference type="ChEBI" id="CHEBI:30413"/>
    </ligand>
</feature>
<feature type="binding site" description="axial binding residue" evidence="2">
    <location>
        <position position="60"/>
    </location>
    <ligand>
        <name>heme</name>
        <dbReference type="ChEBI" id="CHEBI:30413"/>
    </ligand>
    <ligandPart>
        <name>Fe</name>
        <dbReference type="ChEBI" id="CHEBI:18248"/>
    </ligandPart>
</feature>
<dbReference type="EMBL" id="AY780259">
    <property type="protein sequence ID" value="AAX21042.1"/>
    <property type="molecule type" value="Genomic_DNA"/>
</dbReference>
<dbReference type="RefSeq" id="YP_636312.1">
    <property type="nucleotide sequence ID" value="NC_008115.1"/>
</dbReference>
<dbReference type="SMR" id="Q49KY5"/>
<dbReference type="GeneID" id="4108465"/>
<dbReference type="GO" id="GO:0009535">
    <property type="term" value="C:chloroplast thylakoid membrane"/>
    <property type="evidence" value="ECO:0007669"/>
    <property type="project" value="UniProtKB-SubCell"/>
</dbReference>
<dbReference type="GO" id="GO:0009055">
    <property type="term" value="F:electron transfer activity"/>
    <property type="evidence" value="ECO:0007669"/>
    <property type="project" value="UniProtKB-UniRule"/>
</dbReference>
<dbReference type="GO" id="GO:0020037">
    <property type="term" value="F:heme binding"/>
    <property type="evidence" value="ECO:0007669"/>
    <property type="project" value="InterPro"/>
</dbReference>
<dbReference type="GO" id="GO:0005506">
    <property type="term" value="F:iron ion binding"/>
    <property type="evidence" value="ECO:0007669"/>
    <property type="project" value="InterPro"/>
</dbReference>
<dbReference type="GO" id="GO:0015979">
    <property type="term" value="P:photosynthesis"/>
    <property type="evidence" value="ECO:0007669"/>
    <property type="project" value="UniProtKB-UniRule"/>
</dbReference>
<dbReference type="FunFam" id="1.20.5.700:FF:000001">
    <property type="entry name" value="Cytochrome f"/>
    <property type="match status" value="1"/>
</dbReference>
<dbReference type="FunFam" id="2.40.50.100:FF:000007">
    <property type="entry name" value="Cytochrome f"/>
    <property type="match status" value="1"/>
</dbReference>
<dbReference type="FunFam" id="2.60.40.830:FF:000001">
    <property type="entry name" value="Cytochrome f"/>
    <property type="match status" value="1"/>
</dbReference>
<dbReference type="Gene3D" id="2.40.50.100">
    <property type="match status" value="1"/>
</dbReference>
<dbReference type="Gene3D" id="2.60.40.830">
    <property type="entry name" value="Cytochrome f large domain"/>
    <property type="match status" value="1"/>
</dbReference>
<dbReference type="Gene3D" id="1.20.5.700">
    <property type="entry name" value="Single helix bin"/>
    <property type="match status" value="1"/>
</dbReference>
<dbReference type="HAMAP" id="MF_00610">
    <property type="entry name" value="Cytb6_f_cytF"/>
    <property type="match status" value="1"/>
</dbReference>
<dbReference type="InterPro" id="IPR024058">
    <property type="entry name" value="Cyt-f_TM"/>
</dbReference>
<dbReference type="InterPro" id="IPR002325">
    <property type="entry name" value="Cyt_f"/>
</dbReference>
<dbReference type="InterPro" id="IPR024094">
    <property type="entry name" value="Cyt_f_lg_dom"/>
</dbReference>
<dbReference type="InterPro" id="IPR036826">
    <property type="entry name" value="Cyt_f_lg_dom_sf"/>
</dbReference>
<dbReference type="InterPro" id="IPR011054">
    <property type="entry name" value="Rudment_hybrid_motif"/>
</dbReference>
<dbReference type="PANTHER" id="PTHR33288">
    <property type="match status" value="1"/>
</dbReference>
<dbReference type="PANTHER" id="PTHR33288:SF10">
    <property type="entry name" value="CYTOCHROME F"/>
    <property type="match status" value="1"/>
</dbReference>
<dbReference type="Pfam" id="PF01333">
    <property type="entry name" value="Apocytochr_F_C"/>
    <property type="match status" value="1"/>
</dbReference>
<dbReference type="Pfam" id="PF16639">
    <property type="entry name" value="Apocytochr_F_N"/>
    <property type="match status" value="1"/>
</dbReference>
<dbReference type="PRINTS" id="PR00610">
    <property type="entry name" value="CYTOCHROMEF"/>
</dbReference>
<dbReference type="SUPFAM" id="SSF103431">
    <property type="entry name" value="Cytochrome f subunit of the cytochrome b6f complex, transmembrane anchor"/>
    <property type="match status" value="1"/>
</dbReference>
<dbReference type="SUPFAM" id="SSF49441">
    <property type="entry name" value="Cytochrome f, large domain"/>
    <property type="match status" value="1"/>
</dbReference>
<dbReference type="SUPFAM" id="SSF51246">
    <property type="entry name" value="Rudiment single hybrid motif"/>
    <property type="match status" value="1"/>
</dbReference>
<dbReference type="PROSITE" id="PS51010">
    <property type="entry name" value="CYTF"/>
    <property type="match status" value="1"/>
</dbReference>
<accession>Q49KY5</accession>
<name>CYF_EUCGG</name>
<comment type="function">
    <text evidence="2">Component of the cytochrome b6-f complex, which mediates electron transfer between photosystem II (PSII) and photosystem I (PSI), cyclic electron flow around PSI, and state transitions.</text>
</comment>
<comment type="cofactor">
    <cofactor evidence="2">
        <name>heme</name>
        <dbReference type="ChEBI" id="CHEBI:30413"/>
    </cofactor>
    <text evidence="2">Binds 1 heme group covalently.</text>
</comment>
<comment type="subunit">
    <text evidence="1">The 4 large subunits of the cytochrome b6-f complex are cytochrome b6, subunit IV (17 kDa polypeptide, petD), cytochrome f and the Rieske protein, while the 4 small subunits are PetG, PetL, PetM and PetN. The complex functions as a dimer (By similarity).</text>
</comment>
<comment type="subcellular location">
    <subcellularLocation>
        <location evidence="2">Plastid</location>
        <location evidence="2">Chloroplast thylakoid membrane</location>
        <topology evidence="2">Single-pass membrane protein</topology>
    </subcellularLocation>
</comment>
<comment type="similarity">
    <text evidence="2">Belongs to the cytochrome f family.</text>
</comment>
<geneLocation type="chloroplast"/>
<gene>
    <name evidence="2" type="primary">petA</name>
</gene>
<protein>
    <recommendedName>
        <fullName evidence="2">Cytochrome f</fullName>
    </recommendedName>
</protein>
<reference key="1">
    <citation type="journal article" date="2005" name="DNA Res.">
        <title>Complete nucleotide sequence of the chloroplast genome from the Tasmanian blue gum, Eucalyptus globulus (Myrtaceae).</title>
        <authorList>
            <person name="Steane D.A."/>
        </authorList>
    </citation>
    <scope>NUCLEOTIDE SEQUENCE [LARGE SCALE GENOMIC DNA]</scope>
</reference>
<keyword id="KW-0150">Chloroplast</keyword>
<keyword id="KW-0249">Electron transport</keyword>
<keyword id="KW-0349">Heme</keyword>
<keyword id="KW-0408">Iron</keyword>
<keyword id="KW-0472">Membrane</keyword>
<keyword id="KW-0479">Metal-binding</keyword>
<keyword id="KW-0602">Photosynthesis</keyword>
<keyword id="KW-0934">Plastid</keyword>
<keyword id="KW-0732">Signal</keyword>
<keyword id="KW-0793">Thylakoid</keyword>
<keyword id="KW-0812">Transmembrane</keyword>
<keyword id="KW-1133">Transmembrane helix</keyword>
<keyword id="KW-0813">Transport</keyword>
<proteinExistence type="inferred from homology"/>